<gene>
    <name evidence="1" type="primary">mutL</name>
    <name type="ordered locus">VV1_1292</name>
</gene>
<organism>
    <name type="scientific">Vibrio vulnificus (strain CMCP6)</name>
    <dbReference type="NCBI Taxonomy" id="216895"/>
    <lineage>
        <taxon>Bacteria</taxon>
        <taxon>Pseudomonadati</taxon>
        <taxon>Pseudomonadota</taxon>
        <taxon>Gammaproteobacteria</taxon>
        <taxon>Vibrionales</taxon>
        <taxon>Vibrionaceae</taxon>
        <taxon>Vibrio</taxon>
    </lineage>
</organism>
<proteinExistence type="inferred from homology"/>
<name>MUTL_VIBVU</name>
<accession>Q8DCV0</accession>
<reference key="1">
    <citation type="submission" date="2002-12" db="EMBL/GenBank/DDBJ databases">
        <title>Complete genome sequence of Vibrio vulnificus CMCP6.</title>
        <authorList>
            <person name="Rhee J.H."/>
            <person name="Kim S.Y."/>
            <person name="Chung S.S."/>
            <person name="Kim J.J."/>
            <person name="Moon Y.H."/>
            <person name="Jeong H."/>
            <person name="Choy H.E."/>
        </authorList>
    </citation>
    <scope>NUCLEOTIDE SEQUENCE [LARGE SCALE GENOMIC DNA]</scope>
    <source>
        <strain>CMCP6</strain>
    </source>
</reference>
<protein>
    <recommendedName>
        <fullName evidence="1">DNA mismatch repair protein MutL</fullName>
    </recommendedName>
</protein>
<sequence length="664" mass="74006">MTIRILPARLANQIAAGEVVERPASVVKELVENSLDSGATKIDIDIEKGGAKLIRIRDNGSGIVKDELGLALSRHATSKIHTLDDLEAIMSLGFRGEALASISSVSRLTLTSRPATQEQAWSAYTEGRDMQVKLQPTAHPIGTTVEVVDLFFNTPARRKFLRTEKTEFAHIDELLKRIALSCFDVSITLRHNGKVIRQYRAAHNDLQAEKRLATVCGQAFVRCMLKIELEHQGLKLHGWITTPEGARQQSDLQYCYVNGRMMRDKLINHAIRQSYETSLKPEQFAAYVLFIELDPHQVDVNVHPAKHEVRFHQARLVHDFIYQALASALAQSDSIEQPQINESAFHYQAEPEVAPQGSFPAESNEVPQAVYHAIEKAPAYPRKAGQEQQLQPVAPLESSFSSEQGREVSPAPHNERKAWMESRSPARHTTSSNQSERYGEPAPSKQQVKAYAELLHTPDFPSQNVECHPSPSIASPVQELGKAVSVVAQRYLLTTTKAGCQLISLARAEFYRTLGQLNGDKAPLKSQPLLVPLSLKLEKGLVHAAQEHQDRFARMGILFKMRNEKALMVMGVPAPLRQQNLQLLIPDLLSYAASQAQKEELAQNDTAMAQWLALRVAKVKSHYTLSEAIQIISELEQLWQEKLPLQDSQLVTSVDFSATIAQLT</sequence>
<comment type="function">
    <text evidence="1">This protein is involved in the repair of mismatches in DNA. It is required for dam-dependent methyl-directed DNA mismatch repair. May act as a 'molecular matchmaker', a protein that promotes the formation of a stable complex between two or more DNA-binding proteins in an ATP-dependent manner without itself being part of a final effector complex.</text>
</comment>
<comment type="similarity">
    <text evidence="1">Belongs to the DNA mismatch repair MutL/HexB family.</text>
</comment>
<dbReference type="EMBL" id="AE016795">
    <property type="protein sequence ID" value="AAO09747.1"/>
    <property type="molecule type" value="Genomic_DNA"/>
</dbReference>
<dbReference type="RefSeq" id="WP_011079274.1">
    <property type="nucleotide sequence ID" value="NC_004459.3"/>
</dbReference>
<dbReference type="SMR" id="Q8DCV0"/>
<dbReference type="KEGG" id="vvu:VV1_1292"/>
<dbReference type="HOGENOM" id="CLU_004131_5_1_6"/>
<dbReference type="Proteomes" id="UP000002275">
    <property type="component" value="Chromosome 1"/>
</dbReference>
<dbReference type="GO" id="GO:0032300">
    <property type="term" value="C:mismatch repair complex"/>
    <property type="evidence" value="ECO:0007669"/>
    <property type="project" value="InterPro"/>
</dbReference>
<dbReference type="GO" id="GO:0005524">
    <property type="term" value="F:ATP binding"/>
    <property type="evidence" value="ECO:0007669"/>
    <property type="project" value="InterPro"/>
</dbReference>
<dbReference type="GO" id="GO:0016887">
    <property type="term" value="F:ATP hydrolysis activity"/>
    <property type="evidence" value="ECO:0007669"/>
    <property type="project" value="InterPro"/>
</dbReference>
<dbReference type="GO" id="GO:0140664">
    <property type="term" value="F:ATP-dependent DNA damage sensor activity"/>
    <property type="evidence" value="ECO:0007669"/>
    <property type="project" value="InterPro"/>
</dbReference>
<dbReference type="GO" id="GO:0030983">
    <property type="term" value="F:mismatched DNA binding"/>
    <property type="evidence" value="ECO:0007669"/>
    <property type="project" value="InterPro"/>
</dbReference>
<dbReference type="GO" id="GO:0006298">
    <property type="term" value="P:mismatch repair"/>
    <property type="evidence" value="ECO:0007669"/>
    <property type="project" value="UniProtKB-UniRule"/>
</dbReference>
<dbReference type="CDD" id="cd16926">
    <property type="entry name" value="HATPase_MutL-MLH-PMS-like"/>
    <property type="match status" value="1"/>
</dbReference>
<dbReference type="CDD" id="cd03482">
    <property type="entry name" value="MutL_Trans_MutL"/>
    <property type="match status" value="1"/>
</dbReference>
<dbReference type="FunFam" id="3.30.230.10:FF:000013">
    <property type="entry name" value="DNA mismatch repair endonuclease MutL"/>
    <property type="match status" value="1"/>
</dbReference>
<dbReference type="FunFam" id="3.30.565.10:FF:000003">
    <property type="entry name" value="DNA mismatch repair endonuclease MutL"/>
    <property type="match status" value="1"/>
</dbReference>
<dbReference type="Gene3D" id="3.30.230.10">
    <property type="match status" value="1"/>
</dbReference>
<dbReference type="Gene3D" id="3.30.565.10">
    <property type="entry name" value="Histidine kinase-like ATPase, C-terminal domain"/>
    <property type="match status" value="1"/>
</dbReference>
<dbReference type="Gene3D" id="3.30.1540.20">
    <property type="entry name" value="MutL, C-terminal domain, dimerisation subdomain"/>
    <property type="match status" value="1"/>
</dbReference>
<dbReference type="Gene3D" id="3.30.1370.100">
    <property type="entry name" value="MutL, C-terminal domain, regulatory subdomain"/>
    <property type="match status" value="1"/>
</dbReference>
<dbReference type="HAMAP" id="MF_00149">
    <property type="entry name" value="DNA_mis_repair"/>
    <property type="match status" value="1"/>
</dbReference>
<dbReference type="InterPro" id="IPR014762">
    <property type="entry name" value="DNA_mismatch_repair_CS"/>
</dbReference>
<dbReference type="InterPro" id="IPR020667">
    <property type="entry name" value="DNA_mismatch_repair_MutL"/>
</dbReference>
<dbReference type="InterPro" id="IPR013507">
    <property type="entry name" value="DNA_mismatch_S5_2-like"/>
</dbReference>
<dbReference type="InterPro" id="IPR036890">
    <property type="entry name" value="HATPase_C_sf"/>
</dbReference>
<dbReference type="InterPro" id="IPR002099">
    <property type="entry name" value="MutL/Mlh/PMS"/>
</dbReference>
<dbReference type="InterPro" id="IPR038973">
    <property type="entry name" value="MutL/Mlh/Pms-like"/>
</dbReference>
<dbReference type="InterPro" id="IPR014790">
    <property type="entry name" value="MutL_C"/>
</dbReference>
<dbReference type="InterPro" id="IPR042120">
    <property type="entry name" value="MutL_C_dimsub"/>
</dbReference>
<dbReference type="InterPro" id="IPR042121">
    <property type="entry name" value="MutL_C_regsub"/>
</dbReference>
<dbReference type="InterPro" id="IPR037198">
    <property type="entry name" value="MutL_C_sf"/>
</dbReference>
<dbReference type="InterPro" id="IPR020568">
    <property type="entry name" value="Ribosomal_Su5_D2-typ_SF"/>
</dbReference>
<dbReference type="InterPro" id="IPR014721">
    <property type="entry name" value="Ribsml_uS5_D2-typ_fold_subgr"/>
</dbReference>
<dbReference type="NCBIfam" id="TIGR00585">
    <property type="entry name" value="mutl"/>
    <property type="match status" value="1"/>
</dbReference>
<dbReference type="NCBIfam" id="NF000948">
    <property type="entry name" value="PRK00095.1-1"/>
    <property type="match status" value="1"/>
</dbReference>
<dbReference type="PANTHER" id="PTHR10073">
    <property type="entry name" value="DNA MISMATCH REPAIR PROTEIN MLH, PMS, MUTL"/>
    <property type="match status" value="1"/>
</dbReference>
<dbReference type="PANTHER" id="PTHR10073:SF12">
    <property type="entry name" value="DNA MISMATCH REPAIR PROTEIN MLH1"/>
    <property type="match status" value="1"/>
</dbReference>
<dbReference type="Pfam" id="PF01119">
    <property type="entry name" value="DNA_mis_repair"/>
    <property type="match status" value="1"/>
</dbReference>
<dbReference type="Pfam" id="PF13589">
    <property type="entry name" value="HATPase_c_3"/>
    <property type="match status" value="1"/>
</dbReference>
<dbReference type="Pfam" id="PF08676">
    <property type="entry name" value="MutL_C"/>
    <property type="match status" value="1"/>
</dbReference>
<dbReference type="SMART" id="SM01340">
    <property type="entry name" value="DNA_mis_repair"/>
    <property type="match status" value="1"/>
</dbReference>
<dbReference type="SMART" id="SM00853">
    <property type="entry name" value="MutL_C"/>
    <property type="match status" value="1"/>
</dbReference>
<dbReference type="SUPFAM" id="SSF55874">
    <property type="entry name" value="ATPase domain of HSP90 chaperone/DNA topoisomerase II/histidine kinase"/>
    <property type="match status" value="1"/>
</dbReference>
<dbReference type="SUPFAM" id="SSF118116">
    <property type="entry name" value="DNA mismatch repair protein MutL"/>
    <property type="match status" value="1"/>
</dbReference>
<dbReference type="SUPFAM" id="SSF54211">
    <property type="entry name" value="Ribosomal protein S5 domain 2-like"/>
    <property type="match status" value="1"/>
</dbReference>
<dbReference type="PROSITE" id="PS00058">
    <property type="entry name" value="DNA_MISMATCH_REPAIR_1"/>
    <property type="match status" value="1"/>
</dbReference>
<keyword id="KW-0227">DNA damage</keyword>
<keyword id="KW-0234">DNA repair</keyword>
<feature type="chain" id="PRO_0000177992" description="DNA mismatch repair protein MutL">
    <location>
        <begin position="1"/>
        <end position="664"/>
    </location>
</feature>
<feature type="region of interest" description="Disordered" evidence="2">
    <location>
        <begin position="382"/>
        <end position="447"/>
    </location>
</feature>
<feature type="compositionally biased region" description="Polar residues" evidence="2">
    <location>
        <begin position="427"/>
        <end position="436"/>
    </location>
</feature>
<evidence type="ECO:0000255" key="1">
    <source>
        <dbReference type="HAMAP-Rule" id="MF_00149"/>
    </source>
</evidence>
<evidence type="ECO:0000256" key="2">
    <source>
        <dbReference type="SAM" id="MobiDB-lite"/>
    </source>
</evidence>